<keyword id="KW-0067">ATP-binding</keyword>
<keyword id="KW-0418">Kinase</keyword>
<keyword id="KW-0472">Membrane</keyword>
<keyword id="KW-0547">Nucleotide-binding</keyword>
<keyword id="KW-1185">Reference proteome</keyword>
<keyword id="KW-0346">Stress response</keyword>
<keyword id="KW-0808">Transferase</keyword>
<keyword id="KW-0926">Vacuole</keyword>
<name>SPHK2_ARATH</name>
<accession>F2Y4A3</accession>
<accession>O65419</accession>
<feature type="chain" id="PRO_0000422117" description="Sphingosine kinase 2">
    <location>
        <begin position="1"/>
        <end position="481"/>
    </location>
</feature>
<feature type="domain" description="DAGKc" evidence="2">
    <location>
        <begin position="111"/>
        <end position="253"/>
    </location>
</feature>
<feature type="active site" description="Proton donor/acceptor" evidence="1">
    <location>
        <position position="180"/>
    </location>
</feature>
<feature type="binding site" evidence="2">
    <location>
        <begin position="121"/>
        <end position="123"/>
    </location>
    <ligand>
        <name>ATP</name>
        <dbReference type="ChEBI" id="CHEBI:30616"/>
    </ligand>
</feature>
<feature type="binding site" evidence="2">
    <location>
        <position position="153"/>
    </location>
    <ligand>
        <name>ATP</name>
        <dbReference type="ChEBI" id="CHEBI:30616"/>
    </ligand>
</feature>
<feature type="binding site" evidence="1">
    <location>
        <begin position="178"/>
        <end position="181"/>
    </location>
    <ligand>
        <name>substrate</name>
    </ligand>
</feature>
<feature type="binding site" evidence="2">
    <location>
        <position position="185"/>
    </location>
    <ligand>
        <name>ATP</name>
        <dbReference type="ChEBI" id="CHEBI:30616"/>
    </ligand>
</feature>
<feature type="binding site" evidence="2">
    <location>
        <begin position="210"/>
        <end position="212"/>
    </location>
    <ligand>
        <name>ATP</name>
        <dbReference type="ChEBI" id="CHEBI:30616"/>
    </ligand>
</feature>
<feature type="binding site" evidence="1">
    <location>
        <position position="271"/>
    </location>
    <ligand>
        <name>substrate</name>
    </ligand>
</feature>
<feature type="binding site" evidence="2">
    <location>
        <position position="278"/>
    </location>
    <ligand>
        <name>ATP</name>
        <dbReference type="ChEBI" id="CHEBI:30616"/>
    </ligand>
</feature>
<feature type="binding site" evidence="2">
    <location>
        <position position="284"/>
    </location>
    <ligand>
        <name>ATP</name>
        <dbReference type="ChEBI" id="CHEBI:30616"/>
    </ligand>
</feature>
<feature type="binding site" evidence="2">
    <location>
        <begin position="441"/>
        <end position="443"/>
    </location>
    <ligand>
        <name>ATP</name>
        <dbReference type="ChEBI" id="CHEBI:30616"/>
    </ligand>
</feature>
<sequence length="481" mass="53890">MENDQFMCPTDIITGIVFIDGELAMLTLTADGELRWTEYGLRQYLSMKKDVLGFIVEGKQIRVKAVVEKEAGGICCGQFGGDFVRKDFVFEPLIDQNGWCYKLRQYLDSLGRPKRLLVFVNPFGGKKSAREIFVKEVKPLFEDADVQLEIQETKYQLHAKEFVKSMDVSKYDGIVCVSGDGILVEVVNGLLERADWRNALKLPIGMVPAGTGNGMIKSLLDTVGLRCCANSATISIIRGHKRSVDVATIAQGNTKFFSVLMLAWGLIADIDIESEKFRWMGSARIDFYALQRIICLRRYNGRILFLPAPGFEGYGQPASCSLYQEPHVSDKEVGYQGPETKFEDLEWREMKGPFVTIWLHNVPWGSENTLTAPAAKFSDGYLDLIVLKNCPKLVLLSLMRQTSSGTHVESPYIVYIKVKAFVLEPGALVDEPDKEGIIDSDGEVLARGKRTYKCDQKALMSYDKLQVTVDQGLATLFSPEY</sequence>
<protein>
    <recommendedName>
        <fullName>Sphingosine kinase 2</fullName>
        <ecNumber evidence="3">2.7.1.91</ecNumber>
    </recommendedName>
</protein>
<proteinExistence type="evidence at protein level"/>
<organism>
    <name type="scientific">Arabidopsis thaliana</name>
    <name type="common">Mouse-ear cress</name>
    <dbReference type="NCBI Taxonomy" id="3702"/>
    <lineage>
        <taxon>Eukaryota</taxon>
        <taxon>Viridiplantae</taxon>
        <taxon>Streptophyta</taxon>
        <taxon>Embryophyta</taxon>
        <taxon>Tracheophyta</taxon>
        <taxon>Spermatophyta</taxon>
        <taxon>Magnoliopsida</taxon>
        <taxon>eudicotyledons</taxon>
        <taxon>Gunneridae</taxon>
        <taxon>Pentapetalae</taxon>
        <taxon>rosids</taxon>
        <taxon>malvids</taxon>
        <taxon>Brassicales</taxon>
        <taxon>Brassicaceae</taxon>
        <taxon>Camelineae</taxon>
        <taxon>Arabidopsis</taxon>
    </lineage>
</organism>
<dbReference type="EC" id="2.7.1.91" evidence="3"/>
<dbReference type="EMBL" id="HQ825315">
    <property type="protein sequence ID" value="ADZ38930.1"/>
    <property type="molecule type" value="mRNA"/>
</dbReference>
<dbReference type="EMBL" id="AL022603">
    <property type="protein sequence ID" value="CAA18718.1"/>
    <property type="status" value="ALT_SEQ"/>
    <property type="molecule type" value="Genomic_DNA"/>
</dbReference>
<dbReference type="EMBL" id="AL161555">
    <property type="protein sequence ID" value="CAB81261.1"/>
    <property type="status" value="ALT_SEQ"/>
    <property type="molecule type" value="Genomic_DNA"/>
</dbReference>
<dbReference type="EMBL" id="CP002687">
    <property type="protein sequence ID" value="AEE84464.1"/>
    <property type="molecule type" value="Genomic_DNA"/>
</dbReference>
<dbReference type="EMBL" id="CP002687">
    <property type="protein sequence ID" value="ANM67721.1"/>
    <property type="molecule type" value="Genomic_DNA"/>
</dbReference>
<dbReference type="PIR" id="T05162">
    <property type="entry name" value="T05162"/>
</dbReference>
<dbReference type="RefSeq" id="NP_001190787.1">
    <property type="nucleotide sequence ID" value="NM_001203858.2"/>
</dbReference>
<dbReference type="RefSeq" id="NP_001320021.1">
    <property type="nucleotide sequence ID" value="NM_001341495.1"/>
</dbReference>
<dbReference type="SMR" id="F2Y4A3"/>
<dbReference type="FunCoup" id="F2Y4A3">
    <property type="interactions" value="3034"/>
</dbReference>
<dbReference type="STRING" id="3702.F2Y4A3"/>
<dbReference type="PaxDb" id="3702-AT4G21534.1"/>
<dbReference type="ProteomicsDB" id="245193"/>
<dbReference type="EnsemblPlants" id="AT4G21534.1">
    <property type="protein sequence ID" value="AT4G21534.1"/>
    <property type="gene ID" value="AT4G21534"/>
</dbReference>
<dbReference type="EnsemblPlants" id="AT4G21534.2">
    <property type="protein sequence ID" value="AT4G21534.2"/>
    <property type="gene ID" value="AT4G21534"/>
</dbReference>
<dbReference type="GeneID" id="10723114"/>
<dbReference type="Gramene" id="AT4G21534.1">
    <property type="protein sequence ID" value="AT4G21534.1"/>
    <property type="gene ID" value="AT4G21534"/>
</dbReference>
<dbReference type="Gramene" id="AT4G21534.2">
    <property type="protein sequence ID" value="AT4G21534.2"/>
    <property type="gene ID" value="AT4G21534"/>
</dbReference>
<dbReference type="KEGG" id="ath:AT4G21534"/>
<dbReference type="Araport" id="AT4G21534"/>
<dbReference type="TAIR" id="AT4G21534">
    <property type="gene designation" value="SPHK2"/>
</dbReference>
<dbReference type="eggNOG" id="KOG1116">
    <property type="taxonomic scope" value="Eukaryota"/>
</dbReference>
<dbReference type="HOGENOM" id="CLU_013399_1_2_1"/>
<dbReference type="InParanoid" id="F2Y4A3"/>
<dbReference type="OMA" id="QAWSRRI"/>
<dbReference type="PRO" id="PR:F2Y4A3"/>
<dbReference type="Proteomes" id="UP000006548">
    <property type="component" value="Chromosome 4"/>
</dbReference>
<dbReference type="ExpressionAtlas" id="F2Y4A3">
    <property type="expression patterns" value="baseline and differential"/>
</dbReference>
<dbReference type="GO" id="GO:0009705">
    <property type="term" value="C:plant-type vacuole membrane"/>
    <property type="evidence" value="ECO:0000314"/>
    <property type="project" value="UniProtKB"/>
</dbReference>
<dbReference type="GO" id="GO:0005524">
    <property type="term" value="F:ATP binding"/>
    <property type="evidence" value="ECO:0007669"/>
    <property type="project" value="UniProtKB-KW"/>
</dbReference>
<dbReference type="GO" id="GO:0017050">
    <property type="term" value="F:D-erythro-sphingosine kinase activity"/>
    <property type="evidence" value="ECO:0000314"/>
    <property type="project" value="TAIR"/>
</dbReference>
<dbReference type="GO" id="GO:0070300">
    <property type="term" value="F:phosphatidic acid binding"/>
    <property type="evidence" value="ECO:0000314"/>
    <property type="project" value="TAIR"/>
</dbReference>
<dbReference type="GO" id="GO:0008481">
    <property type="term" value="F:sphingosine kinase activity"/>
    <property type="evidence" value="ECO:0000314"/>
    <property type="project" value="UniProtKB"/>
</dbReference>
<dbReference type="GO" id="GO:0071215">
    <property type="term" value="P:cellular response to abscisic acid stimulus"/>
    <property type="evidence" value="ECO:0000315"/>
    <property type="project" value="UniProtKB"/>
</dbReference>
<dbReference type="GO" id="GO:0009737">
    <property type="term" value="P:response to abscisic acid"/>
    <property type="evidence" value="ECO:0000315"/>
    <property type="project" value="TAIR"/>
</dbReference>
<dbReference type="GO" id="GO:0006665">
    <property type="term" value="P:sphingolipid metabolic process"/>
    <property type="evidence" value="ECO:0000314"/>
    <property type="project" value="UniProtKB"/>
</dbReference>
<dbReference type="FunFam" id="3.40.50.10330:FF:000005">
    <property type="entry name" value="Sphingosine kinase 2"/>
    <property type="match status" value="1"/>
</dbReference>
<dbReference type="Gene3D" id="2.60.200.40">
    <property type="match status" value="1"/>
</dbReference>
<dbReference type="Gene3D" id="3.40.50.10330">
    <property type="entry name" value="Probable inorganic polyphosphate/atp-NAD kinase, domain 1"/>
    <property type="match status" value="1"/>
</dbReference>
<dbReference type="InterPro" id="IPR017438">
    <property type="entry name" value="ATP-NAD_kinase_N"/>
</dbReference>
<dbReference type="InterPro" id="IPR001206">
    <property type="entry name" value="Diacylglycerol_kinase_cat_dom"/>
</dbReference>
<dbReference type="InterPro" id="IPR050187">
    <property type="entry name" value="Lipid_Phosphate_FormReg"/>
</dbReference>
<dbReference type="InterPro" id="IPR016064">
    <property type="entry name" value="NAD/diacylglycerol_kinase_sf"/>
</dbReference>
<dbReference type="InterPro" id="IPR045540">
    <property type="entry name" value="YegS/DAGK_C"/>
</dbReference>
<dbReference type="PANTHER" id="PTHR12358:SF31">
    <property type="entry name" value="ACYLGLYCEROL KINASE, MITOCHONDRIAL"/>
    <property type="match status" value="1"/>
</dbReference>
<dbReference type="PANTHER" id="PTHR12358">
    <property type="entry name" value="SPHINGOSINE KINASE"/>
    <property type="match status" value="1"/>
</dbReference>
<dbReference type="Pfam" id="PF00781">
    <property type="entry name" value="DAGK_cat"/>
    <property type="match status" value="1"/>
</dbReference>
<dbReference type="Pfam" id="PF19279">
    <property type="entry name" value="YegS_C"/>
    <property type="match status" value="1"/>
</dbReference>
<dbReference type="SMART" id="SM00046">
    <property type="entry name" value="DAGKc"/>
    <property type="match status" value="1"/>
</dbReference>
<dbReference type="SUPFAM" id="SSF111331">
    <property type="entry name" value="NAD kinase/diacylglycerol kinase-like"/>
    <property type="match status" value="1"/>
</dbReference>
<dbReference type="PROSITE" id="PS50146">
    <property type="entry name" value="DAGK"/>
    <property type="match status" value="1"/>
</dbReference>
<reference key="1">
    <citation type="journal article" date="2011" name="J. Biol. Chem.">
        <title>Phosphatidic acid binds and stimulates Arabidopsis sphingosine kinases.</title>
        <authorList>
            <person name="Guo L."/>
            <person name="Mishra G."/>
            <person name="Taylor K."/>
            <person name="Wang X."/>
        </authorList>
    </citation>
    <scope>NUCLEOTIDE SEQUENCE [MRNA]</scope>
    <scope>FUNCTION</scope>
    <scope>CATALYTIC ACTIVITY</scope>
    <scope>SUBCELLULAR LOCATION</scope>
    <scope>TISSUE SPECIFICITY</scope>
</reference>
<reference key="2">
    <citation type="journal article" date="1999" name="Nature">
        <title>Sequence and analysis of chromosome 4 of the plant Arabidopsis thaliana.</title>
        <authorList>
            <person name="Mayer K.F.X."/>
            <person name="Schueller C."/>
            <person name="Wambutt R."/>
            <person name="Murphy G."/>
            <person name="Volckaert G."/>
            <person name="Pohl T."/>
            <person name="Duesterhoeft A."/>
            <person name="Stiekema W."/>
            <person name="Entian K.-D."/>
            <person name="Terryn N."/>
            <person name="Harris B."/>
            <person name="Ansorge W."/>
            <person name="Brandt P."/>
            <person name="Grivell L.A."/>
            <person name="Rieger M."/>
            <person name="Weichselgartner M."/>
            <person name="de Simone V."/>
            <person name="Obermaier B."/>
            <person name="Mache R."/>
            <person name="Mueller M."/>
            <person name="Kreis M."/>
            <person name="Delseny M."/>
            <person name="Puigdomenech P."/>
            <person name="Watson M."/>
            <person name="Schmidtheini T."/>
            <person name="Reichert B."/>
            <person name="Portetelle D."/>
            <person name="Perez-Alonso M."/>
            <person name="Boutry M."/>
            <person name="Bancroft I."/>
            <person name="Vos P."/>
            <person name="Hoheisel J."/>
            <person name="Zimmermann W."/>
            <person name="Wedler H."/>
            <person name="Ridley P."/>
            <person name="Langham S.-A."/>
            <person name="McCullagh B."/>
            <person name="Bilham L."/>
            <person name="Robben J."/>
            <person name="van der Schueren J."/>
            <person name="Grymonprez B."/>
            <person name="Chuang Y.-J."/>
            <person name="Vandenbussche F."/>
            <person name="Braeken M."/>
            <person name="Weltjens I."/>
            <person name="Voet M."/>
            <person name="Bastiaens I."/>
            <person name="Aert R."/>
            <person name="Defoor E."/>
            <person name="Weitzenegger T."/>
            <person name="Bothe G."/>
            <person name="Ramsperger U."/>
            <person name="Hilbert H."/>
            <person name="Braun M."/>
            <person name="Holzer E."/>
            <person name="Brandt A."/>
            <person name="Peters S."/>
            <person name="van Staveren M."/>
            <person name="Dirkse W."/>
            <person name="Mooijman P."/>
            <person name="Klein Lankhorst R."/>
            <person name="Rose M."/>
            <person name="Hauf J."/>
            <person name="Koetter P."/>
            <person name="Berneiser S."/>
            <person name="Hempel S."/>
            <person name="Feldpausch M."/>
            <person name="Lamberth S."/>
            <person name="Van den Daele H."/>
            <person name="De Keyser A."/>
            <person name="Buysshaert C."/>
            <person name="Gielen J."/>
            <person name="Villarroel R."/>
            <person name="De Clercq R."/>
            <person name="van Montagu M."/>
            <person name="Rogers J."/>
            <person name="Cronin A."/>
            <person name="Quail M.A."/>
            <person name="Bray-Allen S."/>
            <person name="Clark L."/>
            <person name="Doggett J."/>
            <person name="Hall S."/>
            <person name="Kay M."/>
            <person name="Lennard N."/>
            <person name="McLay K."/>
            <person name="Mayes R."/>
            <person name="Pettett A."/>
            <person name="Rajandream M.A."/>
            <person name="Lyne M."/>
            <person name="Benes V."/>
            <person name="Rechmann S."/>
            <person name="Borkova D."/>
            <person name="Bloecker H."/>
            <person name="Scharfe M."/>
            <person name="Grimm M."/>
            <person name="Loehnert T.-H."/>
            <person name="Dose S."/>
            <person name="de Haan M."/>
            <person name="Maarse A.C."/>
            <person name="Schaefer M."/>
            <person name="Mueller-Auer S."/>
            <person name="Gabel C."/>
            <person name="Fuchs M."/>
            <person name="Fartmann B."/>
            <person name="Granderath K."/>
            <person name="Dauner D."/>
            <person name="Herzl A."/>
            <person name="Neumann S."/>
            <person name="Argiriou A."/>
            <person name="Vitale D."/>
            <person name="Liguori R."/>
            <person name="Piravandi E."/>
            <person name="Massenet O."/>
            <person name="Quigley F."/>
            <person name="Clabauld G."/>
            <person name="Muendlein A."/>
            <person name="Felber R."/>
            <person name="Schnabl S."/>
            <person name="Hiller R."/>
            <person name="Schmidt W."/>
            <person name="Lecharny A."/>
            <person name="Aubourg S."/>
            <person name="Chefdor F."/>
            <person name="Cooke R."/>
            <person name="Berger C."/>
            <person name="Monfort A."/>
            <person name="Casacuberta E."/>
            <person name="Gibbons T."/>
            <person name="Weber N."/>
            <person name="Vandenbol M."/>
            <person name="Bargues M."/>
            <person name="Terol J."/>
            <person name="Torres A."/>
            <person name="Perez-Perez A."/>
            <person name="Purnelle B."/>
            <person name="Bent E."/>
            <person name="Johnson S."/>
            <person name="Tacon D."/>
            <person name="Jesse T."/>
            <person name="Heijnen L."/>
            <person name="Schwarz S."/>
            <person name="Scholler P."/>
            <person name="Heber S."/>
            <person name="Francs P."/>
            <person name="Bielke C."/>
            <person name="Frishman D."/>
            <person name="Haase D."/>
            <person name="Lemcke K."/>
            <person name="Mewes H.-W."/>
            <person name="Stocker S."/>
            <person name="Zaccaria P."/>
            <person name="Bevan M."/>
            <person name="Wilson R.K."/>
            <person name="de la Bastide M."/>
            <person name="Habermann K."/>
            <person name="Parnell L."/>
            <person name="Dedhia N."/>
            <person name="Gnoj L."/>
            <person name="Schutz K."/>
            <person name="Huang E."/>
            <person name="Spiegel L."/>
            <person name="Sekhon M."/>
            <person name="Murray J."/>
            <person name="Sheet P."/>
            <person name="Cordes M."/>
            <person name="Abu-Threideh J."/>
            <person name="Stoneking T."/>
            <person name="Kalicki J."/>
            <person name="Graves T."/>
            <person name="Harmon G."/>
            <person name="Edwards J."/>
            <person name="Latreille P."/>
            <person name="Courtney L."/>
            <person name="Cloud J."/>
            <person name="Abbott A."/>
            <person name="Scott K."/>
            <person name="Johnson D."/>
            <person name="Minx P."/>
            <person name="Bentley D."/>
            <person name="Fulton B."/>
            <person name="Miller N."/>
            <person name="Greco T."/>
            <person name="Kemp K."/>
            <person name="Kramer J."/>
            <person name="Fulton L."/>
            <person name="Mardis E."/>
            <person name="Dante M."/>
            <person name="Pepin K."/>
            <person name="Hillier L.W."/>
            <person name="Nelson J."/>
            <person name="Spieth J."/>
            <person name="Ryan E."/>
            <person name="Andrews S."/>
            <person name="Geisel C."/>
            <person name="Layman D."/>
            <person name="Du H."/>
            <person name="Ali J."/>
            <person name="Berghoff A."/>
            <person name="Jones K."/>
            <person name="Drone K."/>
            <person name="Cotton M."/>
            <person name="Joshu C."/>
            <person name="Antonoiu B."/>
            <person name="Zidanic M."/>
            <person name="Strong C."/>
            <person name="Sun H."/>
            <person name="Lamar B."/>
            <person name="Yordan C."/>
            <person name="Ma P."/>
            <person name="Zhong J."/>
            <person name="Preston R."/>
            <person name="Vil D."/>
            <person name="Shekher M."/>
            <person name="Matero A."/>
            <person name="Shah R."/>
            <person name="Swaby I.K."/>
            <person name="O'Shaughnessy A."/>
            <person name="Rodriguez M."/>
            <person name="Hoffman J."/>
            <person name="Till S."/>
            <person name="Granat S."/>
            <person name="Shohdy N."/>
            <person name="Hasegawa A."/>
            <person name="Hameed A."/>
            <person name="Lodhi M."/>
            <person name="Johnson A."/>
            <person name="Chen E."/>
            <person name="Marra M.A."/>
            <person name="Martienssen R."/>
            <person name="McCombie W.R."/>
        </authorList>
    </citation>
    <scope>NUCLEOTIDE SEQUENCE [LARGE SCALE GENOMIC DNA]</scope>
    <source>
        <strain>cv. Columbia</strain>
    </source>
</reference>
<reference key="3">
    <citation type="journal article" date="2017" name="Plant J.">
        <title>Araport11: a complete reannotation of the Arabidopsis thaliana reference genome.</title>
        <authorList>
            <person name="Cheng C.Y."/>
            <person name="Krishnakumar V."/>
            <person name="Chan A.P."/>
            <person name="Thibaud-Nissen F."/>
            <person name="Schobel S."/>
            <person name="Town C.D."/>
        </authorList>
    </citation>
    <scope>GENOME REANNOTATION</scope>
    <source>
        <strain>cv. Columbia</strain>
    </source>
</reference>
<reference key="4">
    <citation type="journal article" date="2012" name="J. Biol. Chem.">
        <title>Connections between sphingosine kinase and phospholipase D in the abscisic acid signaling pathway in Arabidopsis.</title>
        <authorList>
            <person name="Guo L."/>
            <person name="Mishra G."/>
            <person name="Markham J.E."/>
            <person name="Li M."/>
            <person name="Tawfall A."/>
            <person name="Welti R."/>
            <person name="Wang X."/>
        </authorList>
    </citation>
    <scope>FUNCTION</scope>
    <scope>DISRUPTION PHENOTYPE</scope>
</reference>
<evidence type="ECO:0000250" key="1"/>
<evidence type="ECO:0000255" key="2">
    <source>
        <dbReference type="PROSITE-ProRule" id="PRU00783"/>
    </source>
</evidence>
<evidence type="ECO:0000269" key="3">
    <source>
    </source>
</evidence>
<evidence type="ECO:0000269" key="4">
    <source>
    </source>
</evidence>
<evidence type="ECO:0000305" key="5"/>
<evidence type="ECO:0000305" key="6">
    <source>
    </source>
</evidence>
<gene>
    <name type="primary">SPHK2</name>
    <name type="ordered locus">At4g21534</name>
    <name type="ORF">F18E5.160</name>
</gene>
<comment type="function">
    <text evidence="3 4">Involved in the production of sphingolipid metabolites. Phosphorylates sphingosine and various l sphingoid long-chain base (LCB) products, such as phytosphingosine (PHS, 4-hydroxysphinganine), 4-hydroxy-8-sphingenine, 4,8-sphingadienine and D-erythro-dihydrosphingosine, but has a very few activity toward D,L-threo- dihydrosphingosine. Is required for abscisic acid (ABA) signaling that mediates stomatal closure, inhibition of seed germination and root elongation. May function upstream of PLDALPHA1 and phosphatidic acid (PA) in an amplification response to ABA that mediates stomatal closure.</text>
</comment>
<comment type="catalytic activity">
    <reaction evidence="3">
        <text>a sphingoid base + ATP = a sphingoid 1-phosphate + ADP + H(+)</text>
        <dbReference type="Rhea" id="RHEA:51496"/>
        <dbReference type="ChEBI" id="CHEBI:15378"/>
        <dbReference type="ChEBI" id="CHEBI:30616"/>
        <dbReference type="ChEBI" id="CHEBI:76941"/>
        <dbReference type="ChEBI" id="CHEBI:84410"/>
        <dbReference type="ChEBI" id="CHEBI:456216"/>
        <dbReference type="EC" id="2.7.1.91"/>
    </reaction>
</comment>
<comment type="cofactor">
    <cofactor>
        <name>Mg(2+)</name>
        <dbReference type="ChEBI" id="CHEBI:18420"/>
    </cofactor>
</comment>
<comment type="activity regulation">
    <text>Activated by phosphatidic acid (PA). Binding with PA stimulates the activity by promoting the binding of substrate to the catalytic site.</text>
</comment>
<comment type="subcellular location">
    <subcellularLocation>
        <location evidence="6">Vacuole membrane</location>
        <topology evidence="6">Peripheral membrane protein</topology>
    </subcellularLocation>
    <text>Associated with the tonoplast.</text>
</comment>
<comment type="tissue specificity">
    <text evidence="3">Highly expressed in flowers and siliques and at lower levels in roots, leaves and stems.</text>
</comment>
<comment type="disruption phenotype">
    <text evidence="4">No visible phenotype under normal growth conditions.</text>
</comment>
<comment type="sequence caution" evidence="5">
    <conflict type="erroneous gene model prediction">
        <sequence resource="EMBL-CDS" id="CAA18718"/>
    </conflict>
    <text>The predicted gene At4g21540 has been split into 2 genes: At4g21534 and At4g21540.</text>
</comment>
<comment type="sequence caution" evidence="5">
    <conflict type="erroneous gene model prediction">
        <sequence resource="EMBL-CDS" id="CAB81261"/>
    </conflict>
    <text>The predicted gene At4g21540 has been split into 2 genes: At4g21534 and At4g21540.</text>
</comment>